<accession>Q58639</accession>
<sequence length="539" mass="60707">MEGGAMMLLEVKNVTKKFGDKVVLKNISFTLEEGESLGILGKSGAGKSVLLHMLRGMDGYEPTEGQIIYHVSYCEKCGYVDVPSKAGTPCKKCGNELKKIEVDFWNDKKYTYNLKRKIAIMLQRTFALYGEKTVLENILEALHQAGYEGKEAIDMALKLIKMVKLEHRITHIARDLSGGEKQRVVLARQIAKEPFIFLADEPTGTLDPQTAKLVHSALKELVIKNKISLILTSHWPEVIAELTEKAIWLDKGEIIMEGTSEEVVNKFMETVKEFKKPETEVEIKEDIIKLENVSKHYCSVERGVIKAVDNVTLNIREREIFGLVGTSGAGKTTLAKIIAGVLPPSKGKYWFRVGDEWVDMTKPGPMGRGRAKRYIGILFQEYALYPHRTILENLTEAIGLELPDEFARMKAVYTLVSVGFSEEEAEEILDKYPHELSVGERHRCALAQVLIKEPRVVILDEPTGTMDPITRNTVAESIHKSRIELEQTYIIVSHDMDFVLNVCDRAGLMRNGKLIKVGKPEEIVALLTEEEKQEMFGQK</sequence>
<proteinExistence type="inferred from homology"/>
<reference key="1">
    <citation type="journal article" date="1996" name="Science">
        <title>Complete genome sequence of the methanogenic archaeon, Methanococcus jannaschii.</title>
        <authorList>
            <person name="Bult C.J."/>
            <person name="White O."/>
            <person name="Olsen G.J."/>
            <person name="Zhou L."/>
            <person name="Fleischmann R.D."/>
            <person name="Sutton G.G."/>
            <person name="Blake J.A."/>
            <person name="FitzGerald L.M."/>
            <person name="Clayton R.A."/>
            <person name="Gocayne J.D."/>
            <person name="Kerlavage A.R."/>
            <person name="Dougherty B.A."/>
            <person name="Tomb J.-F."/>
            <person name="Adams M.D."/>
            <person name="Reich C.I."/>
            <person name="Overbeek R."/>
            <person name="Kirkness E.F."/>
            <person name="Weinstock K.G."/>
            <person name="Merrick J.M."/>
            <person name="Glodek A."/>
            <person name="Scott J.L."/>
            <person name="Geoghagen N.S.M."/>
            <person name="Weidman J.F."/>
            <person name="Fuhrmann J.L."/>
            <person name="Nguyen D."/>
            <person name="Utterback T.R."/>
            <person name="Kelley J.M."/>
            <person name="Peterson J.D."/>
            <person name="Sadow P.W."/>
            <person name="Hanna M.C."/>
            <person name="Cotton M.D."/>
            <person name="Roberts K.M."/>
            <person name="Hurst M.A."/>
            <person name="Kaine B.P."/>
            <person name="Borodovsky M."/>
            <person name="Klenk H.-P."/>
            <person name="Fraser C.M."/>
            <person name="Smith H.O."/>
            <person name="Woese C.R."/>
            <person name="Venter J.C."/>
        </authorList>
    </citation>
    <scope>NUCLEOTIDE SEQUENCE [LARGE SCALE GENOMIC DNA]</scope>
    <source>
        <strain>ATCC 43067 / DSM 2661 / JAL-1 / JCM 10045 / NBRC 100440</strain>
    </source>
</reference>
<organism>
    <name type="scientific">Methanocaldococcus jannaschii (strain ATCC 43067 / DSM 2661 / JAL-1 / JCM 10045 / NBRC 100440)</name>
    <name type="common">Methanococcus jannaschii</name>
    <dbReference type="NCBI Taxonomy" id="243232"/>
    <lineage>
        <taxon>Archaea</taxon>
        <taxon>Methanobacteriati</taxon>
        <taxon>Methanobacteriota</taxon>
        <taxon>Methanomada group</taxon>
        <taxon>Methanococci</taxon>
        <taxon>Methanococcales</taxon>
        <taxon>Methanocaldococcaceae</taxon>
        <taxon>Methanocaldococcus</taxon>
    </lineage>
</organism>
<dbReference type="EMBL" id="L77117">
    <property type="protein sequence ID" value="AAB99247.1"/>
    <property type="molecule type" value="Genomic_DNA"/>
</dbReference>
<dbReference type="PIR" id="A64455">
    <property type="entry name" value="A64455"/>
</dbReference>
<dbReference type="SMR" id="Q58639"/>
<dbReference type="FunCoup" id="Q58639">
    <property type="interactions" value="8"/>
</dbReference>
<dbReference type="STRING" id="243232.MJ_1242"/>
<dbReference type="PaxDb" id="243232-MJ_1242"/>
<dbReference type="EnsemblBacteria" id="AAB99247">
    <property type="protein sequence ID" value="AAB99247"/>
    <property type="gene ID" value="MJ_1242"/>
</dbReference>
<dbReference type="KEGG" id="mja:MJ_1242"/>
<dbReference type="eggNOG" id="arCOG00185">
    <property type="taxonomic scope" value="Archaea"/>
</dbReference>
<dbReference type="HOGENOM" id="CLU_000604_86_2_2"/>
<dbReference type="InParanoid" id="Q58639"/>
<dbReference type="PhylomeDB" id="Q58639"/>
<dbReference type="Proteomes" id="UP000000805">
    <property type="component" value="Chromosome"/>
</dbReference>
<dbReference type="GO" id="GO:0005524">
    <property type="term" value="F:ATP binding"/>
    <property type="evidence" value="ECO:0007669"/>
    <property type="project" value="UniProtKB-KW"/>
</dbReference>
<dbReference type="GO" id="GO:0016887">
    <property type="term" value="F:ATP hydrolysis activity"/>
    <property type="evidence" value="ECO:0007669"/>
    <property type="project" value="InterPro"/>
</dbReference>
<dbReference type="GO" id="GO:0019700">
    <property type="term" value="P:organic phosphonate catabolic process"/>
    <property type="evidence" value="ECO:0000318"/>
    <property type="project" value="GO_Central"/>
</dbReference>
<dbReference type="Gene3D" id="3.40.50.300">
    <property type="entry name" value="P-loop containing nucleotide triphosphate hydrolases"/>
    <property type="match status" value="2"/>
</dbReference>
<dbReference type="InterPro" id="IPR003593">
    <property type="entry name" value="AAA+_ATPase"/>
</dbReference>
<dbReference type="InterPro" id="IPR003439">
    <property type="entry name" value="ABC_transporter-like_ATP-bd"/>
</dbReference>
<dbReference type="InterPro" id="IPR017871">
    <property type="entry name" value="ABC_transporter-like_CS"/>
</dbReference>
<dbReference type="InterPro" id="IPR017669">
    <property type="entry name" value="Me_Coenz_M_Rdtase_A2"/>
</dbReference>
<dbReference type="InterPro" id="IPR027417">
    <property type="entry name" value="P-loop_NTPase"/>
</dbReference>
<dbReference type="NCBIfam" id="TIGR03269">
    <property type="entry name" value="met_CoM_red_A2"/>
    <property type="match status" value="1"/>
</dbReference>
<dbReference type="PANTHER" id="PTHR42764:SF2">
    <property type="entry name" value="ABC TRANSPORTER, ATP-BINDING PROTEIN"/>
    <property type="match status" value="1"/>
</dbReference>
<dbReference type="PANTHER" id="PTHR42764">
    <property type="entry name" value="PHOSPHONATES UTILIZATION ATP-BINDING PROTEIN PHNK-RELATED"/>
    <property type="match status" value="1"/>
</dbReference>
<dbReference type="Pfam" id="PF00005">
    <property type="entry name" value="ABC_tran"/>
    <property type="match status" value="2"/>
</dbReference>
<dbReference type="SMART" id="SM00382">
    <property type="entry name" value="AAA"/>
    <property type="match status" value="2"/>
</dbReference>
<dbReference type="SUPFAM" id="SSF52540">
    <property type="entry name" value="P-loop containing nucleoside triphosphate hydrolases"/>
    <property type="match status" value="2"/>
</dbReference>
<dbReference type="PROSITE" id="PS00211">
    <property type="entry name" value="ABC_TRANSPORTER_1"/>
    <property type="match status" value="1"/>
</dbReference>
<dbReference type="PROSITE" id="PS50893">
    <property type="entry name" value="ABC_TRANSPORTER_2"/>
    <property type="match status" value="2"/>
</dbReference>
<comment type="similarity">
    <text evidence="2">Belongs to the ABC transporter superfamily.</text>
</comment>
<gene>
    <name type="ordered locus">MJ1242</name>
</gene>
<name>Y1242_METJA</name>
<keyword id="KW-0067">ATP-binding</keyword>
<keyword id="KW-0547">Nucleotide-binding</keyword>
<keyword id="KW-1185">Reference proteome</keyword>
<keyword id="KW-0677">Repeat</keyword>
<keyword id="KW-0813">Transport</keyword>
<evidence type="ECO:0000255" key="1">
    <source>
        <dbReference type="PROSITE-ProRule" id="PRU00434"/>
    </source>
</evidence>
<evidence type="ECO:0000305" key="2"/>
<protein>
    <recommendedName>
        <fullName>Uncharacterized ABC transporter ATP-binding protein MJ1242</fullName>
    </recommendedName>
</protein>
<feature type="chain" id="PRO_0000093224" description="Uncharacterized ABC transporter ATP-binding protein MJ1242">
    <location>
        <begin position="1"/>
        <end position="539"/>
    </location>
</feature>
<feature type="domain" description="ABC transporter 1" evidence="1">
    <location>
        <begin position="9"/>
        <end position="276"/>
    </location>
</feature>
<feature type="domain" description="ABC transporter 2" evidence="1">
    <location>
        <begin position="288"/>
        <end position="536"/>
    </location>
</feature>
<feature type="binding site" evidence="1">
    <location>
        <begin position="41"/>
        <end position="48"/>
    </location>
    <ligand>
        <name>ATP</name>
        <dbReference type="ChEBI" id="CHEBI:30616"/>
        <label>1</label>
    </ligand>
</feature>
<feature type="binding site" evidence="1">
    <location>
        <begin position="325"/>
        <end position="332"/>
    </location>
    <ligand>
        <name>ATP</name>
        <dbReference type="ChEBI" id="CHEBI:30616"/>
        <label>2</label>
    </ligand>
</feature>